<organism>
    <name type="scientific">Bordetella parapertussis (strain 12822 / ATCC BAA-587 / NCTC 13253)</name>
    <dbReference type="NCBI Taxonomy" id="257311"/>
    <lineage>
        <taxon>Bacteria</taxon>
        <taxon>Pseudomonadati</taxon>
        <taxon>Pseudomonadota</taxon>
        <taxon>Betaproteobacteria</taxon>
        <taxon>Burkholderiales</taxon>
        <taxon>Alcaligenaceae</taxon>
        <taxon>Bordetella</taxon>
    </lineage>
</organism>
<proteinExistence type="inferred from homology"/>
<keyword id="KW-0547">Nucleotide-binding</keyword>
<sequence>MPSFDVVSEVDKHELTNAVDQANRELSTRFDFKGTNASFELEGYVVTQVAPSAFQLKQMLDILRGRLSARSIDVRCMDVADPLENLGGARQKVTIKQGIEQAIAKKLIAAIKASKVKVESQINGEKLRITGKKRDDLQAVIALLRKTDVDLPLQFENFRD</sequence>
<accession>Q7WBC1</accession>
<evidence type="ECO:0000255" key="1">
    <source>
        <dbReference type="HAMAP-Rule" id="MF_00632"/>
    </source>
</evidence>
<reference key="1">
    <citation type="journal article" date="2003" name="Nat. Genet.">
        <title>Comparative analysis of the genome sequences of Bordetella pertussis, Bordetella parapertussis and Bordetella bronchiseptica.</title>
        <authorList>
            <person name="Parkhill J."/>
            <person name="Sebaihia M."/>
            <person name="Preston A."/>
            <person name="Murphy L.D."/>
            <person name="Thomson N.R."/>
            <person name="Harris D.E."/>
            <person name="Holden M.T.G."/>
            <person name="Churcher C.M."/>
            <person name="Bentley S.D."/>
            <person name="Mungall K.L."/>
            <person name="Cerdeno-Tarraga A.-M."/>
            <person name="Temple L."/>
            <person name="James K.D."/>
            <person name="Harris B."/>
            <person name="Quail M.A."/>
            <person name="Achtman M."/>
            <person name="Atkin R."/>
            <person name="Baker S."/>
            <person name="Basham D."/>
            <person name="Bason N."/>
            <person name="Cherevach I."/>
            <person name="Chillingworth T."/>
            <person name="Collins M."/>
            <person name="Cronin A."/>
            <person name="Davis P."/>
            <person name="Doggett J."/>
            <person name="Feltwell T."/>
            <person name="Goble A."/>
            <person name="Hamlin N."/>
            <person name="Hauser H."/>
            <person name="Holroyd S."/>
            <person name="Jagels K."/>
            <person name="Leather S."/>
            <person name="Moule S."/>
            <person name="Norberczak H."/>
            <person name="O'Neil S."/>
            <person name="Ormond D."/>
            <person name="Price C."/>
            <person name="Rabbinowitsch E."/>
            <person name="Rutter S."/>
            <person name="Sanders M."/>
            <person name="Saunders D."/>
            <person name="Seeger K."/>
            <person name="Sharp S."/>
            <person name="Simmonds M."/>
            <person name="Skelton J."/>
            <person name="Squares R."/>
            <person name="Squares S."/>
            <person name="Stevens K."/>
            <person name="Unwin L."/>
            <person name="Whitehead S."/>
            <person name="Barrell B.G."/>
            <person name="Maskell D.J."/>
        </authorList>
    </citation>
    <scope>NUCLEOTIDE SEQUENCE [LARGE SCALE GENOMIC DNA]</scope>
    <source>
        <strain>12822 / ATCC BAA-587 / NCTC 13253</strain>
    </source>
</reference>
<protein>
    <recommendedName>
        <fullName evidence="1">Nucleotide-binding protein BPP1084</fullName>
    </recommendedName>
</protein>
<gene>
    <name type="ordered locus">BPP1084</name>
</gene>
<feature type="chain" id="PRO_0000106175" description="Nucleotide-binding protein BPP1084">
    <location>
        <begin position="1"/>
        <end position="160"/>
    </location>
</feature>
<name>Y1084_BORPA</name>
<dbReference type="EMBL" id="BX640426">
    <property type="protein sequence ID" value="CAE36385.1"/>
    <property type="molecule type" value="Genomic_DNA"/>
</dbReference>
<dbReference type="RefSeq" id="WP_003809252.1">
    <property type="nucleotide sequence ID" value="NC_002928.3"/>
</dbReference>
<dbReference type="SMR" id="Q7WBC1"/>
<dbReference type="GeneID" id="69602841"/>
<dbReference type="KEGG" id="bpa:BPP1084"/>
<dbReference type="HOGENOM" id="CLU_099839_1_0_4"/>
<dbReference type="Proteomes" id="UP000001421">
    <property type="component" value="Chromosome"/>
</dbReference>
<dbReference type="GO" id="GO:0005829">
    <property type="term" value="C:cytosol"/>
    <property type="evidence" value="ECO:0007669"/>
    <property type="project" value="TreeGrafter"/>
</dbReference>
<dbReference type="GO" id="GO:0000166">
    <property type="term" value="F:nucleotide binding"/>
    <property type="evidence" value="ECO:0007669"/>
    <property type="project" value="TreeGrafter"/>
</dbReference>
<dbReference type="CDD" id="cd11740">
    <property type="entry name" value="YajQ_like"/>
    <property type="match status" value="1"/>
</dbReference>
<dbReference type="Gene3D" id="3.30.70.860">
    <property type="match status" value="1"/>
</dbReference>
<dbReference type="Gene3D" id="3.30.70.990">
    <property type="entry name" value="YajQ-like, domain 2"/>
    <property type="match status" value="1"/>
</dbReference>
<dbReference type="HAMAP" id="MF_00632">
    <property type="entry name" value="YajQ"/>
    <property type="match status" value="1"/>
</dbReference>
<dbReference type="InterPro" id="IPR007551">
    <property type="entry name" value="DUF520"/>
</dbReference>
<dbReference type="InterPro" id="IPR035571">
    <property type="entry name" value="UPF0234-like_C"/>
</dbReference>
<dbReference type="InterPro" id="IPR035570">
    <property type="entry name" value="UPF0234_N"/>
</dbReference>
<dbReference type="InterPro" id="IPR036183">
    <property type="entry name" value="YajQ-like_sf"/>
</dbReference>
<dbReference type="NCBIfam" id="NF003819">
    <property type="entry name" value="PRK05412.1"/>
    <property type="match status" value="1"/>
</dbReference>
<dbReference type="PANTHER" id="PTHR30476">
    <property type="entry name" value="UPF0234 PROTEIN YAJQ"/>
    <property type="match status" value="1"/>
</dbReference>
<dbReference type="PANTHER" id="PTHR30476:SF0">
    <property type="entry name" value="UPF0234 PROTEIN YAJQ"/>
    <property type="match status" value="1"/>
</dbReference>
<dbReference type="Pfam" id="PF04461">
    <property type="entry name" value="DUF520"/>
    <property type="match status" value="1"/>
</dbReference>
<dbReference type="SUPFAM" id="SSF89963">
    <property type="entry name" value="YajQ-like"/>
    <property type="match status" value="2"/>
</dbReference>
<comment type="function">
    <text evidence="1">Nucleotide-binding protein.</text>
</comment>
<comment type="similarity">
    <text evidence="1">Belongs to the YajQ family.</text>
</comment>